<dbReference type="EMBL" id="CP000800">
    <property type="protein sequence ID" value="ABV17458.1"/>
    <property type="molecule type" value="Genomic_DNA"/>
</dbReference>
<dbReference type="RefSeq" id="WP_000589326.1">
    <property type="nucleotide sequence ID" value="NC_009801.1"/>
</dbReference>
<dbReference type="SMR" id="A7ZKI5"/>
<dbReference type="GeneID" id="75203667"/>
<dbReference type="KEGG" id="ecw:EcE24377A_1203"/>
<dbReference type="HOGENOM" id="CLU_045235_1_0_6"/>
<dbReference type="Proteomes" id="UP000001122">
    <property type="component" value="Chromosome"/>
</dbReference>
<dbReference type="GO" id="GO:0009428">
    <property type="term" value="C:bacterial-type flagellum basal body, distal rod, P ring"/>
    <property type="evidence" value="ECO:0007669"/>
    <property type="project" value="InterPro"/>
</dbReference>
<dbReference type="GO" id="GO:0030288">
    <property type="term" value="C:outer membrane-bounded periplasmic space"/>
    <property type="evidence" value="ECO:0007669"/>
    <property type="project" value="InterPro"/>
</dbReference>
<dbReference type="GO" id="GO:0005198">
    <property type="term" value="F:structural molecule activity"/>
    <property type="evidence" value="ECO:0007669"/>
    <property type="project" value="InterPro"/>
</dbReference>
<dbReference type="GO" id="GO:0071973">
    <property type="term" value="P:bacterial-type flagellum-dependent cell motility"/>
    <property type="evidence" value="ECO:0007669"/>
    <property type="project" value="InterPro"/>
</dbReference>
<dbReference type="HAMAP" id="MF_00416">
    <property type="entry name" value="FlgI"/>
    <property type="match status" value="1"/>
</dbReference>
<dbReference type="InterPro" id="IPR001782">
    <property type="entry name" value="Flag_FlgI"/>
</dbReference>
<dbReference type="NCBIfam" id="NF003676">
    <property type="entry name" value="PRK05303.1"/>
    <property type="match status" value="1"/>
</dbReference>
<dbReference type="PANTHER" id="PTHR30381">
    <property type="entry name" value="FLAGELLAR P-RING PERIPLASMIC PROTEIN FLGI"/>
    <property type="match status" value="1"/>
</dbReference>
<dbReference type="PANTHER" id="PTHR30381:SF0">
    <property type="entry name" value="FLAGELLAR P-RING PROTEIN"/>
    <property type="match status" value="1"/>
</dbReference>
<dbReference type="Pfam" id="PF02119">
    <property type="entry name" value="FlgI"/>
    <property type="match status" value="1"/>
</dbReference>
<dbReference type="PRINTS" id="PR01010">
    <property type="entry name" value="FLGPRINGFLGI"/>
</dbReference>
<proteinExistence type="inferred from homology"/>
<organism>
    <name type="scientific">Escherichia coli O139:H28 (strain E24377A / ETEC)</name>
    <dbReference type="NCBI Taxonomy" id="331111"/>
    <lineage>
        <taxon>Bacteria</taxon>
        <taxon>Pseudomonadati</taxon>
        <taxon>Pseudomonadota</taxon>
        <taxon>Gammaproteobacteria</taxon>
        <taxon>Enterobacterales</taxon>
        <taxon>Enterobacteriaceae</taxon>
        <taxon>Escherichia</taxon>
    </lineage>
</organism>
<protein>
    <recommendedName>
        <fullName evidence="1">Flagellar P-ring protein</fullName>
    </recommendedName>
    <alternativeName>
        <fullName evidence="1">Basal body P-ring protein</fullName>
    </alternativeName>
</protein>
<name>FLGI_ECO24</name>
<evidence type="ECO:0000255" key="1">
    <source>
        <dbReference type="HAMAP-Rule" id="MF_00416"/>
    </source>
</evidence>
<feature type="signal peptide" evidence="1">
    <location>
        <begin position="1"/>
        <end position="19"/>
    </location>
</feature>
<feature type="chain" id="PRO_1000060075" description="Flagellar P-ring protein">
    <location>
        <begin position="20"/>
        <end position="365"/>
    </location>
</feature>
<keyword id="KW-0975">Bacterial flagellum</keyword>
<keyword id="KW-0574">Periplasm</keyword>
<keyword id="KW-1185">Reference proteome</keyword>
<keyword id="KW-0732">Signal</keyword>
<comment type="function">
    <text evidence="1">Assembles around the rod to form the L-ring and probably protects the motor/basal body from shearing forces during rotation.</text>
</comment>
<comment type="subunit">
    <text evidence="1">The basal body constitutes a major portion of the flagellar organelle and consists of four rings (L,P,S, and M) mounted on a central rod.</text>
</comment>
<comment type="subcellular location">
    <subcellularLocation>
        <location evidence="1">Periplasm</location>
    </subcellularLocation>
    <subcellularLocation>
        <location evidence="1">Bacterial flagellum basal body</location>
    </subcellularLocation>
</comment>
<comment type="similarity">
    <text evidence="1">Belongs to the FlgI family.</text>
</comment>
<accession>A7ZKI5</accession>
<sequence>MIKFLSALILLLVTTAAQAERIRDLTSVQGVRQNSLIGYGLVVGLDGTGDQTTQTPFTTQTLNNMLSQLGITVPTGTNMQLKNVAAVMVTASLPPFGRQGQTIDVVVSSMGNAKSLRGGTLLMTPLKGVDSQVYALAQGNILVGGAGASAGGSSVQVNQLNGGRITNGAVIERELPSQFGVGNTLNLQLNDEDFSMAQQIADTINRVRGYGSATALDARTIQVRVPSGNSSQVRFLADIQNMQVNVTPQDAKVVINSRTGSVVMNREVTLDSCAVAQGNLSVTVNRQANVSQPDTPFGGGQTVVTPQTQIDLRQSGGSLQSVRSSASLNNVVRALNALGATPMDLMSILQSMQSAGCLRAKLEII</sequence>
<gene>
    <name evidence="1" type="primary">flgI</name>
    <name type="ordered locus">EcE24377A_1203</name>
</gene>
<reference key="1">
    <citation type="journal article" date="2008" name="J. Bacteriol.">
        <title>The pangenome structure of Escherichia coli: comparative genomic analysis of E. coli commensal and pathogenic isolates.</title>
        <authorList>
            <person name="Rasko D.A."/>
            <person name="Rosovitz M.J."/>
            <person name="Myers G.S.A."/>
            <person name="Mongodin E.F."/>
            <person name="Fricke W.F."/>
            <person name="Gajer P."/>
            <person name="Crabtree J."/>
            <person name="Sebaihia M."/>
            <person name="Thomson N.R."/>
            <person name="Chaudhuri R."/>
            <person name="Henderson I.R."/>
            <person name="Sperandio V."/>
            <person name="Ravel J."/>
        </authorList>
    </citation>
    <scope>NUCLEOTIDE SEQUENCE [LARGE SCALE GENOMIC DNA]</scope>
    <source>
        <strain>E24377A / ETEC</strain>
    </source>
</reference>